<sequence length="49" mass="5802">MWDMIKNFFLFSSGVLQATTLLLVILIFMYVRKTKKKNKESSGFMDDKH</sequence>
<dbReference type="EMBL" id="AL009126">
    <property type="protein sequence ID" value="CAX52718.1"/>
    <property type="molecule type" value="Genomic_DNA"/>
</dbReference>
<dbReference type="RefSeq" id="WP_003226909.1">
    <property type="nucleotide sequence ID" value="NZ_OZ025638.1"/>
</dbReference>
<dbReference type="RefSeq" id="YP_003097802.1">
    <property type="nucleotide sequence ID" value="NC_000964.3"/>
</dbReference>
<dbReference type="FunCoup" id="C0H3U2">
    <property type="interactions" value="6"/>
</dbReference>
<dbReference type="STRING" id="224308.BSU40529"/>
<dbReference type="PaxDb" id="224308-BSU40529"/>
<dbReference type="EnsemblBacteria" id="CAX52718">
    <property type="protein sequence ID" value="CAX52718"/>
    <property type="gene ID" value="BSU_40529"/>
</dbReference>
<dbReference type="GeneID" id="8302993"/>
<dbReference type="KEGG" id="bsu:BSU40529"/>
<dbReference type="PATRIC" id="fig|224308.179.peg.4388"/>
<dbReference type="InParanoid" id="C0H3U2"/>
<dbReference type="OrthoDB" id="2901978at2"/>
<dbReference type="BioCyc" id="BSUB:BSU40529-MONOMER"/>
<dbReference type="Proteomes" id="UP000001570">
    <property type="component" value="Chromosome"/>
</dbReference>
<dbReference type="GO" id="GO:0005886">
    <property type="term" value="C:plasma membrane"/>
    <property type="evidence" value="ECO:0007669"/>
    <property type="project" value="UniProtKB-SubCell"/>
</dbReference>
<organism>
    <name type="scientific">Bacillus subtilis (strain 168)</name>
    <dbReference type="NCBI Taxonomy" id="224308"/>
    <lineage>
        <taxon>Bacteria</taxon>
        <taxon>Bacillati</taxon>
        <taxon>Bacillota</taxon>
        <taxon>Bacilli</taxon>
        <taxon>Bacillales</taxon>
        <taxon>Bacillaceae</taxon>
        <taxon>Bacillus</taxon>
    </lineage>
</organism>
<feature type="chain" id="PRO_0000382218" description="Uncharacterized membrane protein YyzH">
    <location>
        <begin position="1"/>
        <end position="49"/>
    </location>
</feature>
<feature type="transmembrane region" description="Helical" evidence="1">
    <location>
        <begin position="8"/>
        <end position="28"/>
    </location>
</feature>
<evidence type="ECO:0000255" key="1"/>
<evidence type="ECO:0000305" key="2"/>
<accession>C0H3U2</accession>
<keyword id="KW-1003">Cell membrane</keyword>
<keyword id="KW-0472">Membrane</keyword>
<keyword id="KW-1185">Reference proteome</keyword>
<keyword id="KW-0812">Transmembrane</keyword>
<keyword id="KW-1133">Transmembrane helix</keyword>
<protein>
    <recommendedName>
        <fullName>Uncharacterized membrane protein YyzH</fullName>
    </recommendedName>
</protein>
<name>YYZH_BACSU</name>
<proteinExistence type="predicted"/>
<reference key="1">
    <citation type="journal article" date="1997" name="Nature">
        <title>The complete genome sequence of the Gram-positive bacterium Bacillus subtilis.</title>
        <authorList>
            <person name="Kunst F."/>
            <person name="Ogasawara N."/>
            <person name="Moszer I."/>
            <person name="Albertini A.M."/>
            <person name="Alloni G."/>
            <person name="Azevedo V."/>
            <person name="Bertero M.G."/>
            <person name="Bessieres P."/>
            <person name="Bolotin A."/>
            <person name="Borchert S."/>
            <person name="Borriss R."/>
            <person name="Boursier L."/>
            <person name="Brans A."/>
            <person name="Braun M."/>
            <person name="Brignell S.C."/>
            <person name="Bron S."/>
            <person name="Brouillet S."/>
            <person name="Bruschi C.V."/>
            <person name="Caldwell B."/>
            <person name="Capuano V."/>
            <person name="Carter N.M."/>
            <person name="Choi S.-K."/>
            <person name="Codani J.-J."/>
            <person name="Connerton I.F."/>
            <person name="Cummings N.J."/>
            <person name="Daniel R.A."/>
            <person name="Denizot F."/>
            <person name="Devine K.M."/>
            <person name="Duesterhoeft A."/>
            <person name="Ehrlich S.D."/>
            <person name="Emmerson P.T."/>
            <person name="Entian K.-D."/>
            <person name="Errington J."/>
            <person name="Fabret C."/>
            <person name="Ferrari E."/>
            <person name="Foulger D."/>
            <person name="Fritz C."/>
            <person name="Fujita M."/>
            <person name="Fujita Y."/>
            <person name="Fuma S."/>
            <person name="Galizzi A."/>
            <person name="Galleron N."/>
            <person name="Ghim S.-Y."/>
            <person name="Glaser P."/>
            <person name="Goffeau A."/>
            <person name="Golightly E.J."/>
            <person name="Grandi G."/>
            <person name="Guiseppi G."/>
            <person name="Guy B.J."/>
            <person name="Haga K."/>
            <person name="Haiech J."/>
            <person name="Harwood C.R."/>
            <person name="Henaut A."/>
            <person name="Hilbert H."/>
            <person name="Holsappel S."/>
            <person name="Hosono S."/>
            <person name="Hullo M.-F."/>
            <person name="Itaya M."/>
            <person name="Jones L.-M."/>
            <person name="Joris B."/>
            <person name="Karamata D."/>
            <person name="Kasahara Y."/>
            <person name="Klaerr-Blanchard M."/>
            <person name="Klein C."/>
            <person name="Kobayashi Y."/>
            <person name="Koetter P."/>
            <person name="Koningstein G."/>
            <person name="Krogh S."/>
            <person name="Kumano M."/>
            <person name="Kurita K."/>
            <person name="Lapidus A."/>
            <person name="Lardinois S."/>
            <person name="Lauber J."/>
            <person name="Lazarevic V."/>
            <person name="Lee S.-M."/>
            <person name="Levine A."/>
            <person name="Liu H."/>
            <person name="Masuda S."/>
            <person name="Mauel C."/>
            <person name="Medigue C."/>
            <person name="Medina N."/>
            <person name="Mellado R.P."/>
            <person name="Mizuno M."/>
            <person name="Moestl D."/>
            <person name="Nakai S."/>
            <person name="Noback M."/>
            <person name="Noone D."/>
            <person name="O'Reilly M."/>
            <person name="Ogawa K."/>
            <person name="Ogiwara A."/>
            <person name="Oudega B."/>
            <person name="Park S.-H."/>
            <person name="Parro V."/>
            <person name="Pohl T.M."/>
            <person name="Portetelle D."/>
            <person name="Porwollik S."/>
            <person name="Prescott A.M."/>
            <person name="Presecan E."/>
            <person name="Pujic P."/>
            <person name="Purnelle B."/>
            <person name="Rapoport G."/>
            <person name="Rey M."/>
            <person name="Reynolds S."/>
            <person name="Rieger M."/>
            <person name="Rivolta C."/>
            <person name="Rocha E."/>
            <person name="Roche B."/>
            <person name="Rose M."/>
            <person name="Sadaie Y."/>
            <person name="Sato T."/>
            <person name="Scanlan E."/>
            <person name="Schleich S."/>
            <person name="Schroeter R."/>
            <person name="Scoffone F."/>
            <person name="Sekiguchi J."/>
            <person name="Sekowska A."/>
            <person name="Seror S.J."/>
            <person name="Serror P."/>
            <person name="Shin B.-S."/>
            <person name="Soldo B."/>
            <person name="Sorokin A."/>
            <person name="Tacconi E."/>
            <person name="Takagi T."/>
            <person name="Takahashi H."/>
            <person name="Takemaru K."/>
            <person name="Takeuchi M."/>
            <person name="Tamakoshi A."/>
            <person name="Tanaka T."/>
            <person name="Terpstra P."/>
            <person name="Tognoni A."/>
            <person name="Tosato V."/>
            <person name="Uchiyama S."/>
            <person name="Vandenbol M."/>
            <person name="Vannier F."/>
            <person name="Vassarotti A."/>
            <person name="Viari A."/>
            <person name="Wambutt R."/>
            <person name="Wedler E."/>
            <person name="Wedler H."/>
            <person name="Weitzenegger T."/>
            <person name="Winters P."/>
            <person name="Wipat A."/>
            <person name="Yamamoto H."/>
            <person name="Yamane K."/>
            <person name="Yasumoto K."/>
            <person name="Yata K."/>
            <person name="Yoshida K."/>
            <person name="Yoshikawa H.-F."/>
            <person name="Zumstein E."/>
            <person name="Yoshikawa H."/>
            <person name="Danchin A."/>
        </authorList>
    </citation>
    <scope>NUCLEOTIDE SEQUENCE [LARGE SCALE GENOMIC DNA]</scope>
    <source>
        <strain>168</strain>
    </source>
</reference>
<comment type="subcellular location">
    <subcellularLocation>
        <location evidence="2">Cell membrane</location>
        <topology evidence="2">Single-pass membrane protein</topology>
    </subcellularLocation>
</comment>
<gene>
    <name type="primary">yyzH</name>
    <name type="ordered locus">BSU40529</name>
</gene>